<geneLocation type="mitochondrion"/>
<feature type="chain" id="PRO_0000257905" description="Cytochrome b">
    <location>
        <begin position="1"/>
        <end position="379"/>
    </location>
</feature>
<feature type="transmembrane region" description="Helical" evidence="2">
    <location>
        <begin position="33"/>
        <end position="53"/>
    </location>
</feature>
<feature type="transmembrane region" description="Helical" evidence="2">
    <location>
        <begin position="77"/>
        <end position="98"/>
    </location>
</feature>
<feature type="transmembrane region" description="Helical" evidence="2">
    <location>
        <begin position="113"/>
        <end position="133"/>
    </location>
</feature>
<feature type="transmembrane region" description="Helical" evidence="2">
    <location>
        <begin position="178"/>
        <end position="198"/>
    </location>
</feature>
<feature type="transmembrane region" description="Helical" evidence="2">
    <location>
        <begin position="226"/>
        <end position="246"/>
    </location>
</feature>
<feature type="transmembrane region" description="Helical" evidence="2">
    <location>
        <begin position="288"/>
        <end position="308"/>
    </location>
</feature>
<feature type="transmembrane region" description="Helical" evidence="2">
    <location>
        <begin position="320"/>
        <end position="340"/>
    </location>
</feature>
<feature type="transmembrane region" description="Helical" evidence="2">
    <location>
        <begin position="347"/>
        <end position="367"/>
    </location>
</feature>
<feature type="binding site" description="axial binding residue" evidence="2">
    <location>
        <position position="83"/>
    </location>
    <ligand>
        <name>heme b</name>
        <dbReference type="ChEBI" id="CHEBI:60344"/>
        <label>b562</label>
    </ligand>
    <ligandPart>
        <name>Fe</name>
        <dbReference type="ChEBI" id="CHEBI:18248"/>
    </ligandPart>
</feature>
<feature type="binding site" description="axial binding residue" evidence="2">
    <location>
        <position position="97"/>
    </location>
    <ligand>
        <name>heme b</name>
        <dbReference type="ChEBI" id="CHEBI:60344"/>
        <label>b566</label>
    </ligand>
    <ligandPart>
        <name>Fe</name>
        <dbReference type="ChEBI" id="CHEBI:18248"/>
    </ligandPart>
</feature>
<feature type="binding site" description="axial binding residue" evidence="2">
    <location>
        <position position="182"/>
    </location>
    <ligand>
        <name>heme b</name>
        <dbReference type="ChEBI" id="CHEBI:60344"/>
        <label>b562</label>
    </ligand>
    <ligandPart>
        <name>Fe</name>
        <dbReference type="ChEBI" id="CHEBI:18248"/>
    </ligandPart>
</feature>
<feature type="binding site" description="axial binding residue" evidence="2">
    <location>
        <position position="196"/>
    </location>
    <ligand>
        <name>heme b</name>
        <dbReference type="ChEBI" id="CHEBI:60344"/>
        <label>b566</label>
    </ligand>
    <ligandPart>
        <name>Fe</name>
        <dbReference type="ChEBI" id="CHEBI:18248"/>
    </ligandPart>
</feature>
<feature type="binding site" evidence="2">
    <location>
        <position position="201"/>
    </location>
    <ligand>
        <name>a ubiquinone</name>
        <dbReference type="ChEBI" id="CHEBI:16389"/>
    </ligand>
</feature>
<name>CYB_HYLPA</name>
<comment type="function">
    <text evidence="2">Component of the ubiquinol-cytochrome c reductase complex (complex III or cytochrome b-c1 complex) that is part of the mitochondrial respiratory chain. The b-c1 complex mediates electron transfer from ubiquinol to cytochrome c. Contributes to the generation of a proton gradient across the mitochondrial membrane that is then used for ATP synthesis.</text>
</comment>
<comment type="cofactor">
    <cofactor evidence="2">
        <name>heme b</name>
        <dbReference type="ChEBI" id="CHEBI:60344"/>
    </cofactor>
    <text evidence="2">Binds 2 heme b groups non-covalently.</text>
</comment>
<comment type="subunit">
    <text evidence="2">The cytochrome bc1 complex contains 11 subunits: 3 respiratory subunits (MT-CYB, CYC1 and UQCRFS1), 2 core proteins (UQCRC1 and UQCRC2) and 6 low-molecular weight proteins (UQCRH/QCR6, UQCRB/QCR7, UQCRQ/QCR8, UQCR10/QCR9, UQCR11/QCR10 and a cleavage product of UQCRFS1). This cytochrome bc1 complex then forms a dimer.</text>
</comment>
<comment type="subcellular location">
    <subcellularLocation>
        <location evidence="2">Mitochondrion inner membrane</location>
        <topology evidence="2">Multi-pass membrane protein</topology>
    </subcellularLocation>
</comment>
<comment type="miscellaneous">
    <text evidence="1">Heme 1 (or BL or b562) is low-potential and absorbs at about 562 nm, and heme 2 (or BH or b566) is high-potential and absorbs at about 566 nm.</text>
</comment>
<comment type="similarity">
    <text evidence="3 4">Belongs to the cytochrome b family.</text>
</comment>
<comment type="caution">
    <text evidence="2">The full-length protein contains only eight transmembrane helices, not nine as predicted by bioinformatics tools.</text>
</comment>
<gene>
    <name type="primary">MT-CYB</name>
    <name type="synonym">COB</name>
    <name type="synonym">CYTB</name>
    <name type="synonym">MTCYB</name>
</gene>
<protein>
    <recommendedName>
        <fullName>Cytochrome b</fullName>
    </recommendedName>
    <alternativeName>
        <fullName>Complex III subunit 3</fullName>
    </alternativeName>
    <alternativeName>
        <fullName>Complex III subunit III</fullName>
    </alternativeName>
    <alternativeName>
        <fullName>Cytochrome b-c1 complex subunit 3</fullName>
    </alternativeName>
    <alternativeName>
        <fullName>Ubiquinol-cytochrome-c reductase complex cytochrome b subunit</fullName>
    </alternativeName>
</protein>
<evidence type="ECO:0000250" key="1"/>
<evidence type="ECO:0000250" key="2">
    <source>
        <dbReference type="UniProtKB" id="P00157"/>
    </source>
</evidence>
<evidence type="ECO:0000255" key="3">
    <source>
        <dbReference type="PROSITE-ProRule" id="PRU00967"/>
    </source>
</evidence>
<evidence type="ECO:0000255" key="4">
    <source>
        <dbReference type="PROSITE-ProRule" id="PRU00968"/>
    </source>
</evidence>
<reference key="1">
    <citation type="journal article" date="2004" name="Can. J. Zool.">
        <title>Phylogenetic position of the Kashmir flying squirrel, Hylopetes fimbriatus (=Eoglaucomys fimbriatus), in the subfamily Pteromyinae.</title>
        <authorList>
            <person name="Oshida T."/>
            <person name="Shafique C.M."/>
            <person name="Barkati S."/>
            <person name="Yasuda M."/>
            <person name="Hussein N.A."/>
            <person name="Endo H."/>
            <person name="Yanagawa H."/>
            <person name="Masuda R."/>
        </authorList>
    </citation>
    <scope>NUCLEOTIDE SEQUENCE [GENOMIC DNA]</scope>
</reference>
<accession>Q564N6</accession>
<dbReference type="EMBL" id="AB126252">
    <property type="protein sequence ID" value="BAD95569.1"/>
    <property type="molecule type" value="Genomic_DNA"/>
</dbReference>
<dbReference type="SMR" id="Q564N6"/>
<dbReference type="GO" id="GO:0005743">
    <property type="term" value="C:mitochondrial inner membrane"/>
    <property type="evidence" value="ECO:0007669"/>
    <property type="project" value="UniProtKB-SubCell"/>
</dbReference>
<dbReference type="GO" id="GO:0045275">
    <property type="term" value="C:respiratory chain complex III"/>
    <property type="evidence" value="ECO:0007669"/>
    <property type="project" value="InterPro"/>
</dbReference>
<dbReference type="GO" id="GO:0046872">
    <property type="term" value="F:metal ion binding"/>
    <property type="evidence" value="ECO:0007669"/>
    <property type="project" value="UniProtKB-KW"/>
</dbReference>
<dbReference type="GO" id="GO:0008121">
    <property type="term" value="F:ubiquinol-cytochrome-c reductase activity"/>
    <property type="evidence" value="ECO:0007669"/>
    <property type="project" value="InterPro"/>
</dbReference>
<dbReference type="GO" id="GO:0006122">
    <property type="term" value="P:mitochondrial electron transport, ubiquinol to cytochrome c"/>
    <property type="evidence" value="ECO:0007669"/>
    <property type="project" value="TreeGrafter"/>
</dbReference>
<dbReference type="CDD" id="cd00290">
    <property type="entry name" value="cytochrome_b_C"/>
    <property type="match status" value="1"/>
</dbReference>
<dbReference type="CDD" id="cd00284">
    <property type="entry name" value="Cytochrome_b_N"/>
    <property type="match status" value="1"/>
</dbReference>
<dbReference type="FunFam" id="1.20.810.10:FF:000002">
    <property type="entry name" value="Cytochrome b"/>
    <property type="match status" value="1"/>
</dbReference>
<dbReference type="Gene3D" id="1.20.810.10">
    <property type="entry name" value="Cytochrome Bc1 Complex, Chain C"/>
    <property type="match status" value="1"/>
</dbReference>
<dbReference type="InterPro" id="IPR005798">
    <property type="entry name" value="Cyt_b/b6_C"/>
</dbReference>
<dbReference type="InterPro" id="IPR036150">
    <property type="entry name" value="Cyt_b/b6_C_sf"/>
</dbReference>
<dbReference type="InterPro" id="IPR005797">
    <property type="entry name" value="Cyt_b/b6_N"/>
</dbReference>
<dbReference type="InterPro" id="IPR027387">
    <property type="entry name" value="Cytb/b6-like_sf"/>
</dbReference>
<dbReference type="InterPro" id="IPR030689">
    <property type="entry name" value="Cytochrome_b"/>
</dbReference>
<dbReference type="InterPro" id="IPR048260">
    <property type="entry name" value="Cytochrome_b_C_euk/bac"/>
</dbReference>
<dbReference type="InterPro" id="IPR048259">
    <property type="entry name" value="Cytochrome_b_N_euk/bac"/>
</dbReference>
<dbReference type="InterPro" id="IPR016174">
    <property type="entry name" value="Di-haem_cyt_TM"/>
</dbReference>
<dbReference type="PANTHER" id="PTHR19271">
    <property type="entry name" value="CYTOCHROME B"/>
    <property type="match status" value="1"/>
</dbReference>
<dbReference type="PANTHER" id="PTHR19271:SF16">
    <property type="entry name" value="CYTOCHROME B"/>
    <property type="match status" value="1"/>
</dbReference>
<dbReference type="Pfam" id="PF00032">
    <property type="entry name" value="Cytochrom_B_C"/>
    <property type="match status" value="1"/>
</dbReference>
<dbReference type="Pfam" id="PF00033">
    <property type="entry name" value="Cytochrome_B"/>
    <property type="match status" value="1"/>
</dbReference>
<dbReference type="PIRSF" id="PIRSF038885">
    <property type="entry name" value="COB"/>
    <property type="match status" value="1"/>
</dbReference>
<dbReference type="SUPFAM" id="SSF81648">
    <property type="entry name" value="a domain/subunit of cytochrome bc1 complex (Ubiquinol-cytochrome c reductase)"/>
    <property type="match status" value="1"/>
</dbReference>
<dbReference type="SUPFAM" id="SSF81342">
    <property type="entry name" value="Transmembrane di-heme cytochromes"/>
    <property type="match status" value="1"/>
</dbReference>
<dbReference type="PROSITE" id="PS51003">
    <property type="entry name" value="CYTB_CTER"/>
    <property type="match status" value="1"/>
</dbReference>
<dbReference type="PROSITE" id="PS51002">
    <property type="entry name" value="CYTB_NTER"/>
    <property type="match status" value="1"/>
</dbReference>
<sequence length="379" mass="43028">MTNIRKSHPLIKIVNHSFIDLPTPSNISAWWNFGSLLGFCLVIQIVTGLFLAMHYTSDTMTAFSSVTHICRDVNYGWLIRYMHANGASMFFICLFLHIGRGLYYGSYTYFETWNVGVILLFAVMATAFMGYVLPWGQMSFWGATVITNLLSAIPYIGTVLVEWIWGGFSVDKATLTRFFAFHFVLPFIIAALAMIHLLFLHETGSNNPSGLISDSDKIPFHPYYSIKDLLGALILLLIFMNLVLFSPDLLGDPDNYTPANPLNTPPHIKPEWYFLFAYAILRSIPNKLGGVLALVFSILILMLFPILHMSKQRSMMFRPLSQCFFWILVADLFTLTWIGGQPVEYPFITIGQVASVLYFMIILIILPSISLLENKLLKW</sequence>
<keyword id="KW-0249">Electron transport</keyword>
<keyword id="KW-0349">Heme</keyword>
<keyword id="KW-0408">Iron</keyword>
<keyword id="KW-0472">Membrane</keyword>
<keyword id="KW-0479">Metal-binding</keyword>
<keyword id="KW-0496">Mitochondrion</keyword>
<keyword id="KW-0999">Mitochondrion inner membrane</keyword>
<keyword id="KW-0679">Respiratory chain</keyword>
<keyword id="KW-0812">Transmembrane</keyword>
<keyword id="KW-1133">Transmembrane helix</keyword>
<keyword id="KW-0813">Transport</keyword>
<keyword id="KW-0830">Ubiquinone</keyword>
<organism>
    <name type="scientific">Hylopetes phayrei</name>
    <name type="common">Indochinese flying squirrel</name>
    <dbReference type="NCBI Taxonomy" id="100945"/>
    <lineage>
        <taxon>Eukaryota</taxon>
        <taxon>Metazoa</taxon>
        <taxon>Chordata</taxon>
        <taxon>Craniata</taxon>
        <taxon>Vertebrata</taxon>
        <taxon>Euteleostomi</taxon>
        <taxon>Mammalia</taxon>
        <taxon>Eutheria</taxon>
        <taxon>Euarchontoglires</taxon>
        <taxon>Glires</taxon>
        <taxon>Rodentia</taxon>
        <taxon>Sciuromorpha</taxon>
        <taxon>Sciuridae</taxon>
        <taxon>Sciurinae</taxon>
        <taxon>Pteromyini</taxon>
        <taxon>Hylopetes</taxon>
    </lineage>
</organism>
<proteinExistence type="inferred from homology"/>